<gene>
    <name evidence="1" type="primary">ureB</name>
    <name type="ordered locus">BPP3856</name>
</gene>
<sequence>MIPGEILTEPGQIELNVGRPTLTIAVVNEGDRPIQVGSHYHFAEANNALVFDRELATGYRLNIPAGNAVRFEPGMRRTVELVAVGGERRIFGFQGKVMGALK</sequence>
<protein>
    <recommendedName>
        <fullName evidence="1">Urease subunit beta</fullName>
        <ecNumber evidence="1">3.5.1.5</ecNumber>
    </recommendedName>
    <alternativeName>
        <fullName evidence="1">Urea amidohydrolase subunit beta</fullName>
    </alternativeName>
</protein>
<dbReference type="EC" id="3.5.1.5" evidence="1"/>
<dbReference type="EMBL" id="BX640435">
    <property type="protein sequence ID" value="CAE39139.1"/>
    <property type="molecule type" value="Genomic_DNA"/>
</dbReference>
<dbReference type="RefSeq" id="WP_003814827.1">
    <property type="nucleotide sequence ID" value="NC_002928.3"/>
</dbReference>
<dbReference type="SMR" id="P0A4R3"/>
<dbReference type="KEGG" id="bpa:BPP3856"/>
<dbReference type="HOGENOM" id="CLU_129707_1_1_4"/>
<dbReference type="UniPathway" id="UPA00258">
    <property type="reaction ID" value="UER00370"/>
</dbReference>
<dbReference type="Proteomes" id="UP000001421">
    <property type="component" value="Chromosome"/>
</dbReference>
<dbReference type="GO" id="GO:0035550">
    <property type="term" value="C:urease complex"/>
    <property type="evidence" value="ECO:0007669"/>
    <property type="project" value="InterPro"/>
</dbReference>
<dbReference type="GO" id="GO:0009039">
    <property type="term" value="F:urease activity"/>
    <property type="evidence" value="ECO:0007669"/>
    <property type="project" value="UniProtKB-UniRule"/>
</dbReference>
<dbReference type="GO" id="GO:0043419">
    <property type="term" value="P:urea catabolic process"/>
    <property type="evidence" value="ECO:0007669"/>
    <property type="project" value="UniProtKB-UniRule"/>
</dbReference>
<dbReference type="CDD" id="cd00407">
    <property type="entry name" value="Urease_beta"/>
    <property type="match status" value="1"/>
</dbReference>
<dbReference type="FunFam" id="2.10.150.10:FF:000001">
    <property type="entry name" value="Urease subunit beta"/>
    <property type="match status" value="1"/>
</dbReference>
<dbReference type="Gene3D" id="2.10.150.10">
    <property type="entry name" value="Urease, beta subunit"/>
    <property type="match status" value="1"/>
</dbReference>
<dbReference type="HAMAP" id="MF_01954">
    <property type="entry name" value="Urease_beta"/>
    <property type="match status" value="1"/>
</dbReference>
<dbReference type="InterPro" id="IPR002019">
    <property type="entry name" value="Urease_beta-like"/>
</dbReference>
<dbReference type="InterPro" id="IPR036461">
    <property type="entry name" value="Urease_betasu_sf"/>
</dbReference>
<dbReference type="InterPro" id="IPR050069">
    <property type="entry name" value="Urease_subunit"/>
</dbReference>
<dbReference type="NCBIfam" id="NF009682">
    <property type="entry name" value="PRK13203.1"/>
    <property type="match status" value="1"/>
</dbReference>
<dbReference type="NCBIfam" id="TIGR00192">
    <property type="entry name" value="urease_beta"/>
    <property type="match status" value="1"/>
</dbReference>
<dbReference type="PANTHER" id="PTHR33569">
    <property type="entry name" value="UREASE"/>
    <property type="match status" value="1"/>
</dbReference>
<dbReference type="PANTHER" id="PTHR33569:SF1">
    <property type="entry name" value="UREASE"/>
    <property type="match status" value="1"/>
</dbReference>
<dbReference type="Pfam" id="PF00699">
    <property type="entry name" value="Urease_beta"/>
    <property type="match status" value="1"/>
</dbReference>
<dbReference type="SUPFAM" id="SSF51278">
    <property type="entry name" value="Urease, beta-subunit"/>
    <property type="match status" value="1"/>
</dbReference>
<reference key="1">
    <citation type="journal article" date="2003" name="Nat. Genet.">
        <title>Comparative analysis of the genome sequences of Bordetella pertussis, Bordetella parapertussis and Bordetella bronchiseptica.</title>
        <authorList>
            <person name="Parkhill J."/>
            <person name="Sebaihia M."/>
            <person name="Preston A."/>
            <person name="Murphy L.D."/>
            <person name="Thomson N.R."/>
            <person name="Harris D.E."/>
            <person name="Holden M.T.G."/>
            <person name="Churcher C.M."/>
            <person name="Bentley S.D."/>
            <person name="Mungall K.L."/>
            <person name="Cerdeno-Tarraga A.-M."/>
            <person name="Temple L."/>
            <person name="James K.D."/>
            <person name="Harris B."/>
            <person name="Quail M.A."/>
            <person name="Achtman M."/>
            <person name="Atkin R."/>
            <person name="Baker S."/>
            <person name="Basham D."/>
            <person name="Bason N."/>
            <person name="Cherevach I."/>
            <person name="Chillingworth T."/>
            <person name="Collins M."/>
            <person name="Cronin A."/>
            <person name="Davis P."/>
            <person name="Doggett J."/>
            <person name="Feltwell T."/>
            <person name="Goble A."/>
            <person name="Hamlin N."/>
            <person name="Hauser H."/>
            <person name="Holroyd S."/>
            <person name="Jagels K."/>
            <person name="Leather S."/>
            <person name="Moule S."/>
            <person name="Norberczak H."/>
            <person name="O'Neil S."/>
            <person name="Ormond D."/>
            <person name="Price C."/>
            <person name="Rabbinowitsch E."/>
            <person name="Rutter S."/>
            <person name="Sanders M."/>
            <person name="Saunders D."/>
            <person name="Seeger K."/>
            <person name="Sharp S."/>
            <person name="Simmonds M."/>
            <person name="Skelton J."/>
            <person name="Squares R."/>
            <person name="Squares S."/>
            <person name="Stevens K."/>
            <person name="Unwin L."/>
            <person name="Whitehead S."/>
            <person name="Barrell B.G."/>
            <person name="Maskell D.J."/>
        </authorList>
    </citation>
    <scope>NUCLEOTIDE SEQUENCE [LARGE SCALE GENOMIC DNA]</scope>
    <source>
        <strain>12822 / ATCC BAA-587 / NCTC 13253</strain>
    </source>
</reference>
<feature type="chain" id="PRO_0000067573" description="Urease subunit beta">
    <location>
        <begin position="1"/>
        <end position="102"/>
    </location>
</feature>
<name>URE2_BORPA</name>
<comment type="catalytic activity">
    <reaction evidence="1">
        <text>urea + 2 H2O + H(+) = hydrogencarbonate + 2 NH4(+)</text>
        <dbReference type="Rhea" id="RHEA:20557"/>
        <dbReference type="ChEBI" id="CHEBI:15377"/>
        <dbReference type="ChEBI" id="CHEBI:15378"/>
        <dbReference type="ChEBI" id="CHEBI:16199"/>
        <dbReference type="ChEBI" id="CHEBI:17544"/>
        <dbReference type="ChEBI" id="CHEBI:28938"/>
        <dbReference type="EC" id="3.5.1.5"/>
    </reaction>
</comment>
<comment type="pathway">
    <text evidence="1">Nitrogen metabolism; urea degradation; CO(2) and NH(3) from urea (urease route): step 1/1.</text>
</comment>
<comment type="subunit">
    <text evidence="1">Heterotrimer of UreA (gamma), UreB (beta) and UreC (alpha) subunits. Three heterotrimers associate to form the active enzyme.</text>
</comment>
<comment type="subcellular location">
    <subcellularLocation>
        <location evidence="1">Cytoplasm</location>
    </subcellularLocation>
</comment>
<comment type="similarity">
    <text evidence="1">Belongs to the urease beta subunit family.</text>
</comment>
<evidence type="ECO:0000255" key="1">
    <source>
        <dbReference type="HAMAP-Rule" id="MF_01954"/>
    </source>
</evidence>
<organism>
    <name type="scientific">Bordetella parapertussis (strain 12822 / ATCC BAA-587 / NCTC 13253)</name>
    <dbReference type="NCBI Taxonomy" id="257311"/>
    <lineage>
        <taxon>Bacteria</taxon>
        <taxon>Pseudomonadati</taxon>
        <taxon>Pseudomonadota</taxon>
        <taxon>Betaproteobacteria</taxon>
        <taxon>Burkholderiales</taxon>
        <taxon>Alcaligenaceae</taxon>
        <taxon>Bordetella</taxon>
    </lineage>
</organism>
<proteinExistence type="inferred from homology"/>
<accession>P0A4R3</accession>
<accession>O06707</accession>
<keyword id="KW-0963">Cytoplasm</keyword>
<keyword id="KW-0378">Hydrolase</keyword>